<organism>
    <name type="scientific">Homo sapiens</name>
    <name type="common">Human</name>
    <dbReference type="NCBI Taxonomy" id="9606"/>
    <lineage>
        <taxon>Eukaryota</taxon>
        <taxon>Metazoa</taxon>
        <taxon>Chordata</taxon>
        <taxon>Craniata</taxon>
        <taxon>Vertebrata</taxon>
        <taxon>Euteleostomi</taxon>
        <taxon>Mammalia</taxon>
        <taxon>Eutheria</taxon>
        <taxon>Euarchontoglires</taxon>
        <taxon>Primates</taxon>
        <taxon>Haplorrhini</taxon>
        <taxon>Catarrhini</taxon>
        <taxon>Hominidae</taxon>
        <taxon>Homo</taxon>
    </lineage>
</organism>
<name>GREM2_HUMAN</name>
<feature type="signal peptide" evidence="2">
    <location>
        <begin position="1"/>
        <end position="21"/>
    </location>
</feature>
<feature type="chain" id="PRO_0000006720" description="Gremlin-2">
    <location>
        <begin position="22"/>
        <end position="168"/>
    </location>
</feature>
<feature type="domain" description="CTCK" evidence="3">
    <location>
        <begin position="73"/>
        <end position="163"/>
    </location>
</feature>
<feature type="glycosylation site" description="N-linked (GlcNAc...) asparagine" evidence="2">
    <location>
        <position position="40"/>
    </location>
</feature>
<feature type="glycosylation site" description="N-linked (GlcNAc...) asparagine" evidence="2">
    <location>
        <position position="161"/>
    </location>
</feature>
<feature type="disulfide bond" evidence="3">
    <location>
        <begin position="73"/>
        <end position="123"/>
    </location>
</feature>
<feature type="disulfide bond" evidence="3">
    <location>
        <begin position="87"/>
        <end position="137"/>
    </location>
</feature>
<feature type="disulfide bond" evidence="3">
    <location>
        <begin position="97"/>
        <end position="155"/>
    </location>
</feature>
<feature type="disulfide bond" evidence="3">
    <location>
        <begin position="101"/>
        <end position="157"/>
    </location>
</feature>
<feature type="sequence variant" id="VAR_078067" description="In STHAG9; dbSNP:rs373941682." evidence="4">
    <original>A</original>
    <variation>V</variation>
    <location>
        <position position="13"/>
    </location>
</feature>
<feature type="sequence variant" id="VAR_078068" description="In STHAG9; dbSNP:rs142343894." evidence="4">
    <original>Q</original>
    <variation>E</variation>
    <location>
        <position position="76"/>
    </location>
</feature>
<feature type="sequence variant" id="VAR_048876" description="In dbSNP:rs34188522.">
    <original>V</original>
    <variation>I</variation>
    <location>
        <position position="131"/>
    </location>
</feature>
<feature type="sequence variant" id="VAR_078069" description="In STHAG9; dbSNP:rs1057519288." evidence="4">
    <original>E</original>
    <variation>D</variation>
    <location>
        <position position="136"/>
    </location>
</feature>
<feature type="sequence conflict" description="In Ref. 3; AAH46632." evidence="5" ref="3">
    <original>L</original>
    <variation>M</variation>
    <location>
        <position position="11"/>
    </location>
</feature>
<feature type="sequence conflict" description="In Ref. 3; AAH46632." evidence="5" ref="3">
    <original>P</original>
    <variation>H</variation>
    <location>
        <position position="31"/>
    </location>
</feature>
<proteinExistence type="evidence at protein level"/>
<reference key="1">
    <citation type="journal article" date="2004" name="Nat. Genet.">
        <title>Complete sequencing and characterization of 21,243 full-length human cDNAs.</title>
        <authorList>
            <person name="Ota T."/>
            <person name="Suzuki Y."/>
            <person name="Nishikawa T."/>
            <person name="Otsuki T."/>
            <person name="Sugiyama T."/>
            <person name="Irie R."/>
            <person name="Wakamatsu A."/>
            <person name="Hayashi K."/>
            <person name="Sato H."/>
            <person name="Nagai K."/>
            <person name="Kimura K."/>
            <person name="Makita H."/>
            <person name="Sekine M."/>
            <person name="Obayashi M."/>
            <person name="Nishi T."/>
            <person name="Shibahara T."/>
            <person name="Tanaka T."/>
            <person name="Ishii S."/>
            <person name="Yamamoto J."/>
            <person name="Saito K."/>
            <person name="Kawai Y."/>
            <person name="Isono Y."/>
            <person name="Nakamura Y."/>
            <person name="Nagahari K."/>
            <person name="Murakami K."/>
            <person name="Yasuda T."/>
            <person name="Iwayanagi T."/>
            <person name="Wagatsuma M."/>
            <person name="Shiratori A."/>
            <person name="Sudo H."/>
            <person name="Hosoiri T."/>
            <person name="Kaku Y."/>
            <person name="Kodaira H."/>
            <person name="Kondo H."/>
            <person name="Sugawara M."/>
            <person name="Takahashi M."/>
            <person name="Kanda K."/>
            <person name="Yokoi T."/>
            <person name="Furuya T."/>
            <person name="Kikkawa E."/>
            <person name="Omura Y."/>
            <person name="Abe K."/>
            <person name="Kamihara K."/>
            <person name="Katsuta N."/>
            <person name="Sato K."/>
            <person name="Tanikawa M."/>
            <person name="Yamazaki M."/>
            <person name="Ninomiya K."/>
            <person name="Ishibashi T."/>
            <person name="Yamashita H."/>
            <person name="Murakawa K."/>
            <person name="Fujimori K."/>
            <person name="Tanai H."/>
            <person name="Kimata M."/>
            <person name="Watanabe M."/>
            <person name="Hiraoka S."/>
            <person name="Chiba Y."/>
            <person name="Ishida S."/>
            <person name="Ono Y."/>
            <person name="Takiguchi S."/>
            <person name="Watanabe S."/>
            <person name="Yosida M."/>
            <person name="Hotuta T."/>
            <person name="Kusano J."/>
            <person name="Kanehori K."/>
            <person name="Takahashi-Fujii A."/>
            <person name="Hara H."/>
            <person name="Tanase T.-O."/>
            <person name="Nomura Y."/>
            <person name="Togiya S."/>
            <person name="Komai F."/>
            <person name="Hara R."/>
            <person name="Takeuchi K."/>
            <person name="Arita M."/>
            <person name="Imose N."/>
            <person name="Musashino K."/>
            <person name="Yuuki H."/>
            <person name="Oshima A."/>
            <person name="Sasaki N."/>
            <person name="Aotsuka S."/>
            <person name="Yoshikawa Y."/>
            <person name="Matsunawa H."/>
            <person name="Ichihara T."/>
            <person name="Shiohata N."/>
            <person name="Sano S."/>
            <person name="Moriya S."/>
            <person name="Momiyama H."/>
            <person name="Satoh N."/>
            <person name="Takami S."/>
            <person name="Terashima Y."/>
            <person name="Suzuki O."/>
            <person name="Nakagawa S."/>
            <person name="Senoh A."/>
            <person name="Mizoguchi H."/>
            <person name="Goto Y."/>
            <person name="Shimizu F."/>
            <person name="Wakebe H."/>
            <person name="Hishigaki H."/>
            <person name="Watanabe T."/>
            <person name="Sugiyama A."/>
            <person name="Takemoto M."/>
            <person name="Kawakami B."/>
            <person name="Yamazaki M."/>
            <person name="Watanabe K."/>
            <person name="Kumagai A."/>
            <person name="Itakura S."/>
            <person name="Fukuzumi Y."/>
            <person name="Fujimori Y."/>
            <person name="Komiyama M."/>
            <person name="Tashiro H."/>
            <person name="Tanigami A."/>
            <person name="Fujiwara T."/>
            <person name="Ono T."/>
            <person name="Yamada K."/>
            <person name="Fujii Y."/>
            <person name="Ozaki K."/>
            <person name="Hirao M."/>
            <person name="Ohmori Y."/>
            <person name="Kawabata A."/>
            <person name="Hikiji T."/>
            <person name="Kobatake N."/>
            <person name="Inagaki H."/>
            <person name="Ikema Y."/>
            <person name="Okamoto S."/>
            <person name="Okitani R."/>
            <person name="Kawakami T."/>
            <person name="Noguchi S."/>
            <person name="Itoh T."/>
            <person name="Shigeta K."/>
            <person name="Senba T."/>
            <person name="Matsumura K."/>
            <person name="Nakajima Y."/>
            <person name="Mizuno T."/>
            <person name="Morinaga M."/>
            <person name="Sasaki M."/>
            <person name="Togashi T."/>
            <person name="Oyama M."/>
            <person name="Hata H."/>
            <person name="Watanabe M."/>
            <person name="Komatsu T."/>
            <person name="Mizushima-Sugano J."/>
            <person name="Satoh T."/>
            <person name="Shirai Y."/>
            <person name="Takahashi Y."/>
            <person name="Nakagawa K."/>
            <person name="Okumura K."/>
            <person name="Nagase T."/>
            <person name="Nomura N."/>
            <person name="Kikuchi H."/>
            <person name="Masuho Y."/>
            <person name="Yamashita R."/>
            <person name="Nakai K."/>
            <person name="Yada T."/>
            <person name="Nakamura Y."/>
            <person name="Ohara O."/>
            <person name="Isogai T."/>
            <person name="Sugano S."/>
        </authorList>
    </citation>
    <scope>NUCLEOTIDE SEQUENCE [LARGE SCALE MRNA]</scope>
    <source>
        <tissue>Colon</tissue>
    </source>
</reference>
<reference key="2">
    <citation type="journal article" date="2006" name="Nature">
        <title>The DNA sequence and biological annotation of human chromosome 1.</title>
        <authorList>
            <person name="Gregory S.G."/>
            <person name="Barlow K.F."/>
            <person name="McLay K.E."/>
            <person name="Kaul R."/>
            <person name="Swarbreck D."/>
            <person name="Dunham A."/>
            <person name="Scott C.E."/>
            <person name="Howe K.L."/>
            <person name="Woodfine K."/>
            <person name="Spencer C.C.A."/>
            <person name="Jones M.C."/>
            <person name="Gillson C."/>
            <person name="Searle S."/>
            <person name="Zhou Y."/>
            <person name="Kokocinski F."/>
            <person name="McDonald L."/>
            <person name="Evans R."/>
            <person name="Phillips K."/>
            <person name="Atkinson A."/>
            <person name="Cooper R."/>
            <person name="Jones C."/>
            <person name="Hall R.E."/>
            <person name="Andrews T.D."/>
            <person name="Lloyd C."/>
            <person name="Ainscough R."/>
            <person name="Almeida J.P."/>
            <person name="Ambrose K.D."/>
            <person name="Anderson F."/>
            <person name="Andrew R.W."/>
            <person name="Ashwell R.I.S."/>
            <person name="Aubin K."/>
            <person name="Babbage A.K."/>
            <person name="Bagguley C.L."/>
            <person name="Bailey J."/>
            <person name="Beasley H."/>
            <person name="Bethel G."/>
            <person name="Bird C.P."/>
            <person name="Bray-Allen S."/>
            <person name="Brown J.Y."/>
            <person name="Brown A.J."/>
            <person name="Buckley D."/>
            <person name="Burton J."/>
            <person name="Bye J."/>
            <person name="Carder C."/>
            <person name="Chapman J.C."/>
            <person name="Clark S.Y."/>
            <person name="Clarke G."/>
            <person name="Clee C."/>
            <person name="Cobley V."/>
            <person name="Collier R.E."/>
            <person name="Corby N."/>
            <person name="Coville G.J."/>
            <person name="Davies J."/>
            <person name="Deadman R."/>
            <person name="Dunn M."/>
            <person name="Earthrowl M."/>
            <person name="Ellington A.G."/>
            <person name="Errington H."/>
            <person name="Frankish A."/>
            <person name="Frankland J."/>
            <person name="French L."/>
            <person name="Garner P."/>
            <person name="Garnett J."/>
            <person name="Gay L."/>
            <person name="Ghori M.R.J."/>
            <person name="Gibson R."/>
            <person name="Gilby L.M."/>
            <person name="Gillett W."/>
            <person name="Glithero R.J."/>
            <person name="Grafham D.V."/>
            <person name="Griffiths C."/>
            <person name="Griffiths-Jones S."/>
            <person name="Grocock R."/>
            <person name="Hammond S."/>
            <person name="Harrison E.S.I."/>
            <person name="Hart E."/>
            <person name="Haugen E."/>
            <person name="Heath P.D."/>
            <person name="Holmes S."/>
            <person name="Holt K."/>
            <person name="Howden P.J."/>
            <person name="Hunt A.R."/>
            <person name="Hunt S.E."/>
            <person name="Hunter G."/>
            <person name="Isherwood J."/>
            <person name="James R."/>
            <person name="Johnson C."/>
            <person name="Johnson D."/>
            <person name="Joy A."/>
            <person name="Kay M."/>
            <person name="Kershaw J.K."/>
            <person name="Kibukawa M."/>
            <person name="Kimberley A.M."/>
            <person name="King A."/>
            <person name="Knights A.J."/>
            <person name="Lad H."/>
            <person name="Laird G."/>
            <person name="Lawlor S."/>
            <person name="Leongamornlert D.A."/>
            <person name="Lloyd D.M."/>
            <person name="Loveland J."/>
            <person name="Lovell J."/>
            <person name="Lush M.J."/>
            <person name="Lyne R."/>
            <person name="Martin S."/>
            <person name="Mashreghi-Mohammadi M."/>
            <person name="Matthews L."/>
            <person name="Matthews N.S.W."/>
            <person name="McLaren S."/>
            <person name="Milne S."/>
            <person name="Mistry S."/>
            <person name="Moore M.J.F."/>
            <person name="Nickerson T."/>
            <person name="O'Dell C.N."/>
            <person name="Oliver K."/>
            <person name="Palmeiri A."/>
            <person name="Palmer S.A."/>
            <person name="Parker A."/>
            <person name="Patel D."/>
            <person name="Pearce A.V."/>
            <person name="Peck A.I."/>
            <person name="Pelan S."/>
            <person name="Phelps K."/>
            <person name="Phillimore B.J."/>
            <person name="Plumb R."/>
            <person name="Rajan J."/>
            <person name="Raymond C."/>
            <person name="Rouse G."/>
            <person name="Saenphimmachak C."/>
            <person name="Sehra H.K."/>
            <person name="Sheridan E."/>
            <person name="Shownkeen R."/>
            <person name="Sims S."/>
            <person name="Skuce C.D."/>
            <person name="Smith M."/>
            <person name="Steward C."/>
            <person name="Subramanian S."/>
            <person name="Sycamore N."/>
            <person name="Tracey A."/>
            <person name="Tromans A."/>
            <person name="Van Helmond Z."/>
            <person name="Wall M."/>
            <person name="Wallis J.M."/>
            <person name="White S."/>
            <person name="Whitehead S.L."/>
            <person name="Wilkinson J.E."/>
            <person name="Willey D.L."/>
            <person name="Williams H."/>
            <person name="Wilming L."/>
            <person name="Wray P.W."/>
            <person name="Wu Z."/>
            <person name="Coulson A."/>
            <person name="Vaudin M."/>
            <person name="Sulston J.E."/>
            <person name="Durbin R.M."/>
            <person name="Hubbard T."/>
            <person name="Wooster R."/>
            <person name="Dunham I."/>
            <person name="Carter N.P."/>
            <person name="McVean G."/>
            <person name="Ross M.T."/>
            <person name="Harrow J."/>
            <person name="Olson M.V."/>
            <person name="Beck S."/>
            <person name="Rogers J."/>
            <person name="Bentley D.R."/>
        </authorList>
    </citation>
    <scope>NUCLEOTIDE SEQUENCE [LARGE SCALE GENOMIC DNA]</scope>
</reference>
<reference key="3">
    <citation type="journal article" date="2004" name="Genome Res.">
        <title>The status, quality, and expansion of the NIH full-length cDNA project: the Mammalian Gene Collection (MGC).</title>
        <authorList>
            <consortium name="The MGC Project Team"/>
        </authorList>
    </citation>
    <scope>NUCLEOTIDE SEQUENCE [LARGE SCALE MRNA]</scope>
    <source>
        <tissue>Brain</tissue>
    </source>
</reference>
<reference key="4">
    <citation type="journal article" date="2004" name="Oncol. Rep.">
        <title>Identification and characterization of human CKTSF1B2 and CKTSF1B3 genes in silico.</title>
        <authorList>
            <person name="Katoh M."/>
            <person name="Katoh M."/>
        </authorList>
    </citation>
    <scope>IDENTIFICATION</scope>
</reference>
<reference key="5">
    <citation type="journal article" date="2015" name="J. Dent. Res.">
        <title>GREMLIN 2 mutations and dental anomalies.</title>
        <authorList>
            <person name="Kantaputra P.N."/>
            <person name="Kaewgahya M."/>
            <person name="Hatsadaloi A."/>
            <person name="Vogel P."/>
            <person name="Kawasaki K."/>
            <person name="Ohazama A."/>
            <person name="Ketudat Cairns J.R."/>
        </authorList>
    </citation>
    <scope>VARIANTS STHAG9 VAL-13; GLU-76 AND ASP-136</scope>
</reference>
<dbReference type="EMBL" id="AK024848">
    <property type="protein sequence ID" value="BAB15026.1"/>
    <property type="molecule type" value="mRNA"/>
</dbReference>
<dbReference type="EMBL" id="AL358176">
    <property type="status" value="NOT_ANNOTATED_CDS"/>
    <property type="molecule type" value="Genomic_DNA"/>
</dbReference>
<dbReference type="EMBL" id="BC046632">
    <property type="protein sequence ID" value="AAH46632.1"/>
    <property type="molecule type" value="mRNA"/>
</dbReference>
<dbReference type="CCDS" id="CCDS31070.1"/>
<dbReference type="RefSeq" id="NP_071914.3">
    <property type="nucleotide sequence ID" value="NM_022469.3"/>
</dbReference>
<dbReference type="RefSeq" id="XP_011542551.1">
    <property type="nucleotide sequence ID" value="XM_011544249.3"/>
</dbReference>
<dbReference type="RefSeq" id="XP_054194187.1">
    <property type="nucleotide sequence ID" value="XM_054338212.1"/>
</dbReference>
<dbReference type="SMR" id="Q9H772"/>
<dbReference type="BioGRID" id="122150">
    <property type="interactions" value="37"/>
</dbReference>
<dbReference type="FunCoup" id="Q9H772">
    <property type="interactions" value="364"/>
</dbReference>
<dbReference type="IntAct" id="Q9H772">
    <property type="interactions" value="33"/>
</dbReference>
<dbReference type="STRING" id="9606.ENSP00000318650"/>
<dbReference type="GlyCosmos" id="Q9H772">
    <property type="glycosylation" value="2 sites, No reported glycans"/>
</dbReference>
<dbReference type="GlyGen" id="Q9H772">
    <property type="glycosylation" value="2 sites"/>
</dbReference>
<dbReference type="iPTMnet" id="Q9H772"/>
<dbReference type="PhosphoSitePlus" id="Q9H772"/>
<dbReference type="BioMuta" id="GREM2"/>
<dbReference type="DMDM" id="62510699"/>
<dbReference type="jPOST" id="Q9H772"/>
<dbReference type="MassIVE" id="Q9H772"/>
<dbReference type="PaxDb" id="9606-ENSP00000318650"/>
<dbReference type="PeptideAtlas" id="Q9H772"/>
<dbReference type="ProteomicsDB" id="81084"/>
<dbReference type="Antibodypedia" id="4089">
    <property type="antibodies" value="160 antibodies from 29 providers"/>
</dbReference>
<dbReference type="DNASU" id="64388"/>
<dbReference type="Ensembl" id="ENST00000318160.5">
    <property type="protein sequence ID" value="ENSP00000318650.4"/>
    <property type="gene ID" value="ENSG00000180875.5"/>
</dbReference>
<dbReference type="GeneID" id="64388"/>
<dbReference type="KEGG" id="hsa:64388"/>
<dbReference type="MANE-Select" id="ENST00000318160.5">
    <property type="protein sequence ID" value="ENSP00000318650.4"/>
    <property type="RefSeq nucleotide sequence ID" value="NM_022469.4"/>
    <property type="RefSeq protein sequence ID" value="NP_071914.3"/>
</dbReference>
<dbReference type="UCSC" id="uc001hys.4">
    <property type="organism name" value="human"/>
</dbReference>
<dbReference type="AGR" id="HGNC:17655"/>
<dbReference type="CTD" id="64388"/>
<dbReference type="DisGeNET" id="64388"/>
<dbReference type="GeneCards" id="GREM2"/>
<dbReference type="HGNC" id="HGNC:17655">
    <property type="gene designation" value="GREM2"/>
</dbReference>
<dbReference type="HPA" id="ENSG00000180875">
    <property type="expression patterns" value="Tissue enhanced (gallbladder, liver)"/>
</dbReference>
<dbReference type="MalaCards" id="GREM2"/>
<dbReference type="MIM" id="608832">
    <property type="type" value="gene"/>
</dbReference>
<dbReference type="MIM" id="617275">
    <property type="type" value="phenotype"/>
</dbReference>
<dbReference type="neXtProt" id="NX_Q9H772"/>
<dbReference type="OpenTargets" id="ENSG00000180875"/>
<dbReference type="PharmGKB" id="PA134968998"/>
<dbReference type="VEuPathDB" id="HostDB:ENSG00000180875"/>
<dbReference type="eggNOG" id="ENOG502QZFW">
    <property type="taxonomic scope" value="Eukaryota"/>
</dbReference>
<dbReference type="GeneTree" id="ENSGT00940000154209"/>
<dbReference type="HOGENOM" id="CLU_101024_2_0_1"/>
<dbReference type="InParanoid" id="Q9H772"/>
<dbReference type="OMA" id="YIPRHIK"/>
<dbReference type="OrthoDB" id="10061784at2759"/>
<dbReference type="PAN-GO" id="Q9H772">
    <property type="GO annotations" value="5 GO annotations based on evolutionary models"/>
</dbReference>
<dbReference type="PhylomeDB" id="Q9H772"/>
<dbReference type="TreeFam" id="TF106445"/>
<dbReference type="PathwayCommons" id="Q9H772"/>
<dbReference type="Reactome" id="R-HSA-201451">
    <property type="pathway name" value="Signaling by BMP"/>
</dbReference>
<dbReference type="SignaLink" id="Q9H772"/>
<dbReference type="BioGRID-ORCS" id="64388">
    <property type="hits" value="22 hits in 1149 CRISPR screens"/>
</dbReference>
<dbReference type="ChiTaRS" id="GREM2">
    <property type="organism name" value="human"/>
</dbReference>
<dbReference type="GenomeRNAi" id="64388"/>
<dbReference type="Pharos" id="Q9H772">
    <property type="development level" value="Tbio"/>
</dbReference>
<dbReference type="PRO" id="PR:Q9H772"/>
<dbReference type="Proteomes" id="UP000005640">
    <property type="component" value="Chromosome 1"/>
</dbReference>
<dbReference type="RNAct" id="Q9H772">
    <property type="molecule type" value="protein"/>
</dbReference>
<dbReference type="Bgee" id="ENSG00000180875">
    <property type="expression patterns" value="Expressed in gall bladder and 131 other cell types or tissues"/>
</dbReference>
<dbReference type="GO" id="GO:0005576">
    <property type="term" value="C:extracellular region"/>
    <property type="evidence" value="ECO:0000304"/>
    <property type="project" value="Reactome"/>
</dbReference>
<dbReference type="GO" id="GO:0005615">
    <property type="term" value="C:extracellular space"/>
    <property type="evidence" value="ECO:0000318"/>
    <property type="project" value="GO_Central"/>
</dbReference>
<dbReference type="GO" id="GO:0036122">
    <property type="term" value="F:BMP binding"/>
    <property type="evidence" value="ECO:0000318"/>
    <property type="project" value="GO_Central"/>
</dbReference>
<dbReference type="GO" id="GO:0005125">
    <property type="term" value="F:cytokine activity"/>
    <property type="evidence" value="ECO:0007669"/>
    <property type="project" value="UniProtKB-KW"/>
</dbReference>
<dbReference type="GO" id="GO:0008201">
    <property type="term" value="F:heparin binding"/>
    <property type="evidence" value="ECO:0000250"/>
    <property type="project" value="UniProtKB"/>
</dbReference>
<dbReference type="GO" id="GO:0042802">
    <property type="term" value="F:identical protein binding"/>
    <property type="evidence" value="ECO:0007669"/>
    <property type="project" value="Ensembl"/>
</dbReference>
<dbReference type="GO" id="GO:0048018">
    <property type="term" value="F:receptor ligand activity"/>
    <property type="evidence" value="ECO:0000318"/>
    <property type="project" value="GO_Central"/>
</dbReference>
<dbReference type="GO" id="GO:0019221">
    <property type="term" value="P:cytokine-mediated signaling pathway"/>
    <property type="evidence" value="ECO:0000250"/>
    <property type="project" value="UniProtKB"/>
</dbReference>
<dbReference type="GO" id="GO:0048263">
    <property type="term" value="P:determination of dorsal identity"/>
    <property type="evidence" value="ECO:0007669"/>
    <property type="project" value="Ensembl"/>
</dbReference>
<dbReference type="GO" id="GO:0010172">
    <property type="term" value="P:embryonic body morphogenesis"/>
    <property type="evidence" value="ECO:0000250"/>
    <property type="project" value="UniProtKB"/>
</dbReference>
<dbReference type="GO" id="GO:0060300">
    <property type="term" value="P:regulation of cytokine activity"/>
    <property type="evidence" value="ECO:0000250"/>
    <property type="project" value="UniProtKB"/>
</dbReference>
<dbReference type="GO" id="GO:0038098">
    <property type="term" value="P:sequestering of BMP from receptor via BMP binding"/>
    <property type="evidence" value="ECO:0000318"/>
    <property type="project" value="GO_Central"/>
</dbReference>
<dbReference type="FunFam" id="2.10.90.10:FF:000013">
    <property type="entry name" value="Gremlin"/>
    <property type="match status" value="1"/>
</dbReference>
<dbReference type="Gene3D" id="2.10.90.10">
    <property type="entry name" value="Cystine-knot cytokines"/>
    <property type="match status" value="1"/>
</dbReference>
<dbReference type="InterPro" id="IPR006207">
    <property type="entry name" value="Cys_knot_C"/>
</dbReference>
<dbReference type="InterPro" id="IPR029034">
    <property type="entry name" value="Cystine-knot_cytokine"/>
</dbReference>
<dbReference type="InterPro" id="IPR004133">
    <property type="entry name" value="DAN"/>
</dbReference>
<dbReference type="InterPro" id="IPR017159">
    <property type="entry name" value="Gremlin-1/2"/>
</dbReference>
<dbReference type="PANTHER" id="PTHR15283">
    <property type="entry name" value="GREMLIN 1"/>
    <property type="match status" value="1"/>
</dbReference>
<dbReference type="PANTHER" id="PTHR15283:SF2">
    <property type="entry name" value="GREMLIN-2"/>
    <property type="match status" value="1"/>
</dbReference>
<dbReference type="Pfam" id="PF03045">
    <property type="entry name" value="DAN"/>
    <property type="match status" value="1"/>
</dbReference>
<dbReference type="PIRSF" id="PIRSF037254">
    <property type="entry name" value="Gremlin_precursor"/>
    <property type="match status" value="1"/>
</dbReference>
<dbReference type="SMART" id="SM00041">
    <property type="entry name" value="CT"/>
    <property type="match status" value="1"/>
</dbReference>
<dbReference type="PROSITE" id="PS01225">
    <property type="entry name" value="CTCK_2"/>
    <property type="match status" value="1"/>
</dbReference>
<sequence length="168" mass="19320">MFWKLSLSLFLVAVLVKVAEARKNRPAGAIPSPYKDGSSNNSERWQHQIKEVLASSQEALVVTERKYLKSDWCKTQPLRQTVSEEGCRSRTILNRFCYGQCNSFYIPRHVKKEEESFQSCAFCKPQRVTSVLVELECPGLDPPFRLKKIQKVKQCRCMSVNLSDSDKQ</sequence>
<protein>
    <recommendedName>
        <fullName>Gremlin-2</fullName>
    </recommendedName>
    <alternativeName>
        <fullName>Cysteine knot superfamily 1, BMP antagonist 2</fullName>
    </alternativeName>
    <alternativeName>
        <fullName>DAN domain family member 3</fullName>
    </alternativeName>
    <alternativeName>
        <fullName>Protein related to DAN and cerberus</fullName>
    </alternativeName>
</protein>
<evidence type="ECO:0000250" key="1">
    <source>
        <dbReference type="UniProtKB" id="O88273"/>
    </source>
</evidence>
<evidence type="ECO:0000255" key="2"/>
<evidence type="ECO:0000255" key="3">
    <source>
        <dbReference type="PROSITE-ProRule" id="PRU00039"/>
    </source>
</evidence>
<evidence type="ECO:0000269" key="4">
    <source>
    </source>
</evidence>
<evidence type="ECO:0000305" key="5"/>
<accession>Q9H772</accession>
<accession>Q86UD9</accession>
<keyword id="KW-0202">Cytokine</keyword>
<keyword id="KW-0217">Developmental protein</keyword>
<keyword id="KW-0225">Disease variant</keyword>
<keyword id="KW-1015">Disulfide bond</keyword>
<keyword id="KW-0325">Glycoprotein</keyword>
<keyword id="KW-0358">Heparin-binding</keyword>
<keyword id="KW-1267">Proteomics identification</keyword>
<keyword id="KW-1185">Reference proteome</keyword>
<keyword id="KW-0964">Secreted</keyword>
<keyword id="KW-0732">Signal</keyword>
<comment type="function">
    <text evidence="1">Cytokine that inhibits the activity of BMP2 and BMP4 in a dose-dependent manner, and thereby modulates signaling by BMP family members. Contributes to the regulation of embryonic morphogenesis via BMP family members. Antagonizes BMP4-induced suppression of progesterone production in granulosa cells.</text>
</comment>
<comment type="subunit">
    <text evidence="1">Homodimer. Interacts with BMP2, BMP4 and BMP7, but has lower affinity for BMP7 than for BMP2 and BMP4. Binds heparin; this impairs the interaction with BMP2.</text>
</comment>
<comment type="subcellular location">
    <subcellularLocation>
        <location evidence="5">Secreted</location>
    </subcellularLocation>
</comment>
<comment type="PTM">
    <text evidence="1">N-glycosylated.</text>
</comment>
<comment type="disease" evidence="4">
    <disease id="DI-04899">
        <name>Tooth agenesis, selective, 9</name>
        <acronym>STHAG9</acronym>
        <description>A form of selective tooth agenesis, a common anomaly characterized by the congenital absence of one or more teeth. Selective tooth agenesis without associated systemic disorders has sometimes been divided into 2 types: oligodontia, defined as agenesis of 6 or more permanent teeth, and hypodontia, defined as agenesis of less than 6 teeth. The number in both cases does not include absence of third molars (wisdom teeth). STHAG9 inheritance is autosomal dominant.</description>
        <dbReference type="MIM" id="617275"/>
    </disease>
    <text>The disease is caused by variants affecting the gene represented in this entry.</text>
</comment>
<comment type="similarity">
    <text evidence="5">Belongs to the DAN family.</text>
</comment>
<gene>
    <name type="primary">GREM2</name>
    <name type="synonym">CKTSF1B2</name>
    <name type="synonym">DAND3</name>
    <name type="synonym">PRDC</name>
</gene>